<gene>
    <name evidence="1" type="primary">thyA</name>
    <name type="ordered locus">Aave_1450</name>
</gene>
<name>TYSY_PARC0</name>
<keyword id="KW-0963">Cytoplasm</keyword>
<keyword id="KW-0489">Methyltransferase</keyword>
<keyword id="KW-0545">Nucleotide biosynthesis</keyword>
<keyword id="KW-0808">Transferase</keyword>
<reference key="1">
    <citation type="submission" date="2006-12" db="EMBL/GenBank/DDBJ databases">
        <title>Complete sequence of Acidovorax avenae subsp. citrulli AAC00-1.</title>
        <authorList>
            <person name="Copeland A."/>
            <person name="Lucas S."/>
            <person name="Lapidus A."/>
            <person name="Barry K."/>
            <person name="Detter J.C."/>
            <person name="Glavina del Rio T."/>
            <person name="Dalin E."/>
            <person name="Tice H."/>
            <person name="Pitluck S."/>
            <person name="Kiss H."/>
            <person name="Brettin T."/>
            <person name="Bruce D."/>
            <person name="Han C."/>
            <person name="Tapia R."/>
            <person name="Gilna P."/>
            <person name="Schmutz J."/>
            <person name="Larimer F."/>
            <person name="Land M."/>
            <person name="Hauser L."/>
            <person name="Kyrpides N."/>
            <person name="Kim E."/>
            <person name="Stahl D."/>
            <person name="Richardson P."/>
        </authorList>
    </citation>
    <scope>NUCLEOTIDE SEQUENCE [LARGE SCALE GENOMIC DNA]</scope>
    <source>
        <strain>AAC00-1</strain>
    </source>
</reference>
<organism>
    <name type="scientific">Paracidovorax citrulli (strain AAC00-1)</name>
    <name type="common">Acidovorax citrulli</name>
    <dbReference type="NCBI Taxonomy" id="397945"/>
    <lineage>
        <taxon>Bacteria</taxon>
        <taxon>Pseudomonadati</taxon>
        <taxon>Pseudomonadota</taxon>
        <taxon>Betaproteobacteria</taxon>
        <taxon>Burkholderiales</taxon>
        <taxon>Comamonadaceae</taxon>
        <taxon>Paracidovorax</taxon>
    </lineage>
</organism>
<dbReference type="EC" id="2.1.1.45" evidence="1"/>
<dbReference type="EMBL" id="CP000512">
    <property type="protein sequence ID" value="ABM32041.1"/>
    <property type="molecule type" value="Genomic_DNA"/>
</dbReference>
<dbReference type="RefSeq" id="WP_011794591.1">
    <property type="nucleotide sequence ID" value="NC_008752.1"/>
</dbReference>
<dbReference type="SMR" id="A1TM53"/>
<dbReference type="STRING" id="397945.Aave_1450"/>
<dbReference type="GeneID" id="79791119"/>
<dbReference type="KEGG" id="aav:Aave_1450"/>
<dbReference type="eggNOG" id="COG0207">
    <property type="taxonomic scope" value="Bacteria"/>
</dbReference>
<dbReference type="HOGENOM" id="CLU_021669_0_0_4"/>
<dbReference type="OrthoDB" id="9774633at2"/>
<dbReference type="UniPathway" id="UPA00575"/>
<dbReference type="Proteomes" id="UP000002596">
    <property type="component" value="Chromosome"/>
</dbReference>
<dbReference type="GO" id="GO:0005829">
    <property type="term" value="C:cytosol"/>
    <property type="evidence" value="ECO:0007669"/>
    <property type="project" value="TreeGrafter"/>
</dbReference>
<dbReference type="GO" id="GO:0004799">
    <property type="term" value="F:thymidylate synthase activity"/>
    <property type="evidence" value="ECO:0007669"/>
    <property type="project" value="UniProtKB-UniRule"/>
</dbReference>
<dbReference type="GO" id="GO:0006231">
    <property type="term" value="P:dTMP biosynthetic process"/>
    <property type="evidence" value="ECO:0007669"/>
    <property type="project" value="UniProtKB-UniRule"/>
</dbReference>
<dbReference type="GO" id="GO:0006235">
    <property type="term" value="P:dTTP biosynthetic process"/>
    <property type="evidence" value="ECO:0007669"/>
    <property type="project" value="UniProtKB-UniRule"/>
</dbReference>
<dbReference type="GO" id="GO:0032259">
    <property type="term" value="P:methylation"/>
    <property type="evidence" value="ECO:0007669"/>
    <property type="project" value="UniProtKB-KW"/>
</dbReference>
<dbReference type="CDD" id="cd00351">
    <property type="entry name" value="TS_Pyrimidine_HMase"/>
    <property type="match status" value="1"/>
</dbReference>
<dbReference type="FunFam" id="3.30.572.10:FF:000001">
    <property type="entry name" value="Thymidylate synthase"/>
    <property type="match status" value="1"/>
</dbReference>
<dbReference type="Gene3D" id="3.30.572.10">
    <property type="entry name" value="Thymidylate synthase/dCMP hydroxymethylase domain"/>
    <property type="match status" value="1"/>
</dbReference>
<dbReference type="HAMAP" id="MF_00008">
    <property type="entry name" value="Thymidy_synth_bact"/>
    <property type="match status" value="1"/>
</dbReference>
<dbReference type="InterPro" id="IPR045097">
    <property type="entry name" value="Thymidate_synth/dCMP_Mease"/>
</dbReference>
<dbReference type="InterPro" id="IPR023451">
    <property type="entry name" value="Thymidate_synth/dCMP_Mease_dom"/>
</dbReference>
<dbReference type="InterPro" id="IPR036926">
    <property type="entry name" value="Thymidate_synth/dCMP_Mease_sf"/>
</dbReference>
<dbReference type="InterPro" id="IPR000398">
    <property type="entry name" value="Thymidylate_synthase"/>
</dbReference>
<dbReference type="InterPro" id="IPR020940">
    <property type="entry name" value="Thymidylate_synthase_AS"/>
</dbReference>
<dbReference type="NCBIfam" id="NF002497">
    <property type="entry name" value="PRK01827.1-3"/>
    <property type="match status" value="1"/>
</dbReference>
<dbReference type="NCBIfam" id="NF002499">
    <property type="entry name" value="PRK01827.1-5"/>
    <property type="match status" value="1"/>
</dbReference>
<dbReference type="NCBIfam" id="TIGR03284">
    <property type="entry name" value="thym_sym"/>
    <property type="match status" value="2"/>
</dbReference>
<dbReference type="PANTHER" id="PTHR11548">
    <property type="entry name" value="THYMIDYLATE SYNTHASE 1"/>
    <property type="match status" value="1"/>
</dbReference>
<dbReference type="PANTHER" id="PTHR11548:SF1">
    <property type="entry name" value="THYMIDYLATE SYNTHASE 1"/>
    <property type="match status" value="1"/>
</dbReference>
<dbReference type="Pfam" id="PF00303">
    <property type="entry name" value="Thymidylat_synt"/>
    <property type="match status" value="1"/>
</dbReference>
<dbReference type="PRINTS" id="PR00108">
    <property type="entry name" value="THYMDSNTHASE"/>
</dbReference>
<dbReference type="SUPFAM" id="SSF55831">
    <property type="entry name" value="Thymidylate synthase/dCMP hydroxymethylase"/>
    <property type="match status" value="1"/>
</dbReference>
<dbReference type="PROSITE" id="PS00091">
    <property type="entry name" value="THYMIDYLATE_SYNTHASE"/>
    <property type="match status" value="1"/>
</dbReference>
<comment type="function">
    <text evidence="1">Catalyzes the reductive methylation of 2'-deoxyuridine-5'-monophosphate (dUMP) to 2'-deoxythymidine-5'-monophosphate (dTMP) while utilizing 5,10-methylenetetrahydrofolate (mTHF) as the methyl donor and reductant in the reaction, yielding dihydrofolate (DHF) as a by-product. This enzymatic reaction provides an intracellular de novo source of dTMP, an essential precursor for DNA biosynthesis.</text>
</comment>
<comment type="catalytic activity">
    <reaction evidence="1">
        <text>dUMP + (6R)-5,10-methylene-5,6,7,8-tetrahydrofolate = 7,8-dihydrofolate + dTMP</text>
        <dbReference type="Rhea" id="RHEA:12104"/>
        <dbReference type="ChEBI" id="CHEBI:15636"/>
        <dbReference type="ChEBI" id="CHEBI:57451"/>
        <dbReference type="ChEBI" id="CHEBI:63528"/>
        <dbReference type="ChEBI" id="CHEBI:246422"/>
        <dbReference type="EC" id="2.1.1.45"/>
    </reaction>
</comment>
<comment type="pathway">
    <text evidence="1">Pyrimidine metabolism; dTTP biosynthesis.</text>
</comment>
<comment type="subunit">
    <text evidence="1">Homodimer.</text>
</comment>
<comment type="subcellular location">
    <subcellularLocation>
        <location evidence="1">Cytoplasm</location>
    </subcellularLocation>
</comment>
<comment type="similarity">
    <text evidence="1">Belongs to the thymidylate synthase family. Bacterial-type ThyA subfamily.</text>
</comment>
<protein>
    <recommendedName>
        <fullName evidence="1">Thymidylate synthase</fullName>
        <shortName evidence="1">TS</shortName>
        <shortName evidence="1">TSase</shortName>
        <ecNumber evidence="1">2.1.1.45</ecNumber>
    </recommendedName>
</protein>
<accession>A1TM53</accession>
<sequence length="279" mass="31978">MNAPARPVRSQYEDFMRHVYTHGVAKGDRTGTGTRSVFGYQMRFDLNEGFPLVTTKKVHLKSIITELLWFLTGSSSNHWLKERGVTIWDEWAREDGDLGPVYGVQWRSWPTPDGGHIDQISQVVETLRTHPDSRRIIVSAWNVADLDKMALMPCHAFFQFYVAPPQAAGERGKLSCQLYQRSADIFLGVPFNIASYALLTHMMAQQCNLEVGDFIWTGGDCHIYSNHFEQVELQLSRAPHPYPTLHILRRPDSLFDYRFEDFEVRDYAHHPAIKAPVAV</sequence>
<proteinExistence type="inferred from homology"/>
<evidence type="ECO:0000255" key="1">
    <source>
        <dbReference type="HAMAP-Rule" id="MF_00008"/>
    </source>
</evidence>
<feature type="chain" id="PRO_0000321463" description="Thymidylate synthase">
    <location>
        <begin position="1"/>
        <end position="279"/>
    </location>
</feature>
<feature type="active site" description="Nucleophile" evidence="1">
    <location>
        <position position="154"/>
    </location>
</feature>
<feature type="binding site" description="in other chain" evidence="1">
    <location>
        <position position="29"/>
    </location>
    <ligand>
        <name>dUMP</name>
        <dbReference type="ChEBI" id="CHEBI:246422"/>
        <note>ligand shared between dimeric partners</note>
    </ligand>
</feature>
<feature type="binding site" evidence="1">
    <location>
        <position position="59"/>
    </location>
    <ligand>
        <name>(6R)-5,10-methylene-5,6,7,8-tetrahydrofolate</name>
        <dbReference type="ChEBI" id="CHEBI:15636"/>
    </ligand>
</feature>
<feature type="binding site" evidence="1">
    <location>
        <begin position="134"/>
        <end position="135"/>
    </location>
    <ligand>
        <name>dUMP</name>
        <dbReference type="ChEBI" id="CHEBI:246422"/>
        <note>ligand shared between dimeric partners</note>
    </ligand>
</feature>
<feature type="binding site" description="in other chain" evidence="1">
    <location>
        <begin position="181"/>
        <end position="184"/>
    </location>
    <ligand>
        <name>dUMP</name>
        <dbReference type="ChEBI" id="CHEBI:246422"/>
        <note>ligand shared between dimeric partners</note>
    </ligand>
</feature>
<feature type="binding site" evidence="1">
    <location>
        <position position="184"/>
    </location>
    <ligand>
        <name>(6R)-5,10-methylene-5,6,7,8-tetrahydrofolate</name>
        <dbReference type="ChEBI" id="CHEBI:15636"/>
    </ligand>
</feature>
<feature type="binding site" description="in other chain" evidence="1">
    <location>
        <position position="192"/>
    </location>
    <ligand>
        <name>dUMP</name>
        <dbReference type="ChEBI" id="CHEBI:246422"/>
        <note>ligand shared between dimeric partners</note>
    </ligand>
</feature>
<feature type="binding site" description="in other chain" evidence="1">
    <location>
        <begin position="222"/>
        <end position="224"/>
    </location>
    <ligand>
        <name>dUMP</name>
        <dbReference type="ChEBI" id="CHEBI:246422"/>
        <note>ligand shared between dimeric partners</note>
    </ligand>
</feature>
<feature type="binding site" evidence="1">
    <location>
        <position position="278"/>
    </location>
    <ligand>
        <name>(6R)-5,10-methylene-5,6,7,8-tetrahydrofolate</name>
        <dbReference type="ChEBI" id="CHEBI:15636"/>
    </ligand>
</feature>